<keyword id="KW-0175">Coiled coil</keyword>
<keyword id="KW-0963">Cytoplasm</keyword>
<keyword id="KW-1185">Reference proteome</keyword>
<dbReference type="EMBL" id="BX950851">
    <property type="protein sequence ID" value="CAG75459.1"/>
    <property type="molecule type" value="Genomic_DNA"/>
</dbReference>
<dbReference type="SMR" id="Q6D434"/>
<dbReference type="STRING" id="218491.ECA2560"/>
<dbReference type="DNASU" id="2881951"/>
<dbReference type="KEGG" id="eca:ECA2560"/>
<dbReference type="PATRIC" id="fig|218491.5.peg.2595"/>
<dbReference type="eggNOG" id="COG2926">
    <property type="taxonomic scope" value="Bacteria"/>
</dbReference>
<dbReference type="HOGENOM" id="CLU_153146_0_0_6"/>
<dbReference type="OrthoDB" id="90485at2"/>
<dbReference type="Proteomes" id="UP000007966">
    <property type="component" value="Chromosome"/>
</dbReference>
<dbReference type="GO" id="GO:0005829">
    <property type="term" value="C:cytosol"/>
    <property type="evidence" value="ECO:0007669"/>
    <property type="project" value="TreeGrafter"/>
</dbReference>
<dbReference type="HAMAP" id="MF_00683">
    <property type="entry name" value="Pole_loc_TmaR"/>
    <property type="match status" value="1"/>
</dbReference>
<dbReference type="InterPro" id="IPR007458">
    <property type="entry name" value="DUF496"/>
</dbReference>
<dbReference type="InterPro" id="IPR053375">
    <property type="entry name" value="UPF0265"/>
</dbReference>
<dbReference type="NCBIfam" id="NF003844">
    <property type="entry name" value="PRK05423.1"/>
    <property type="match status" value="1"/>
</dbReference>
<dbReference type="NCBIfam" id="NF040881">
    <property type="entry name" value="PTS_reg_TmaR"/>
    <property type="match status" value="1"/>
</dbReference>
<dbReference type="PANTHER" id="PTHR39591">
    <property type="entry name" value="UPF0265 PROTEIN YEEX"/>
    <property type="match status" value="1"/>
</dbReference>
<dbReference type="PANTHER" id="PTHR39591:SF1">
    <property type="entry name" value="UPF0265 PROTEIN YEEX"/>
    <property type="match status" value="1"/>
</dbReference>
<dbReference type="Pfam" id="PF04363">
    <property type="entry name" value="DUF496"/>
    <property type="match status" value="1"/>
</dbReference>
<dbReference type="PIRSF" id="PIRSF028773">
    <property type="entry name" value="UCP028773"/>
    <property type="match status" value="1"/>
</dbReference>
<protein>
    <recommendedName>
        <fullName evidence="1">Pole-localizer protein TmaR</fullName>
    </recommendedName>
</protein>
<sequence>MDKDTKPCFQDVLEFVRMFRRKNKLQREIVDNEKKIRDNQKRVLLLDNLSEYIKPGMSIEDVQNIIANMRGDYEDRVDDYIIKNADLSKERRELSKKLKAMGEVK</sequence>
<comment type="function">
    <text evidence="1">Pole-localizer protein involved in the regulation of several cellular processes.</text>
</comment>
<comment type="subcellular location">
    <subcellularLocation>
        <location evidence="1">Cytoplasm</location>
    </subcellularLocation>
</comment>
<comment type="similarity">
    <text evidence="1">Belongs to the pole-localizer TmaR family.</text>
</comment>
<gene>
    <name evidence="1" type="primary">tmaR</name>
    <name type="ordered locus">ECA2560</name>
</gene>
<proteinExistence type="inferred from homology"/>
<organism>
    <name type="scientific">Pectobacterium atrosepticum (strain SCRI 1043 / ATCC BAA-672)</name>
    <name type="common">Erwinia carotovora subsp. atroseptica</name>
    <dbReference type="NCBI Taxonomy" id="218491"/>
    <lineage>
        <taxon>Bacteria</taxon>
        <taxon>Pseudomonadati</taxon>
        <taxon>Pseudomonadota</taxon>
        <taxon>Gammaproteobacteria</taxon>
        <taxon>Enterobacterales</taxon>
        <taxon>Pectobacteriaceae</taxon>
        <taxon>Pectobacterium</taxon>
    </lineage>
</organism>
<reference key="1">
    <citation type="journal article" date="2004" name="Proc. Natl. Acad. Sci. U.S.A.">
        <title>Genome sequence of the enterobacterial phytopathogen Erwinia carotovora subsp. atroseptica and characterization of virulence factors.</title>
        <authorList>
            <person name="Bell K.S."/>
            <person name="Sebaihia M."/>
            <person name="Pritchard L."/>
            <person name="Holden M.T.G."/>
            <person name="Hyman L.J."/>
            <person name="Holeva M.C."/>
            <person name="Thomson N.R."/>
            <person name="Bentley S.D."/>
            <person name="Churcher L.J.C."/>
            <person name="Mungall K."/>
            <person name="Atkin R."/>
            <person name="Bason N."/>
            <person name="Brooks K."/>
            <person name="Chillingworth T."/>
            <person name="Clark K."/>
            <person name="Doggett J."/>
            <person name="Fraser A."/>
            <person name="Hance Z."/>
            <person name="Hauser H."/>
            <person name="Jagels K."/>
            <person name="Moule S."/>
            <person name="Norbertczak H."/>
            <person name="Ormond D."/>
            <person name="Price C."/>
            <person name="Quail M.A."/>
            <person name="Sanders M."/>
            <person name="Walker D."/>
            <person name="Whitehead S."/>
            <person name="Salmond G.P.C."/>
            <person name="Birch P.R.J."/>
            <person name="Parkhill J."/>
            <person name="Toth I.K."/>
        </authorList>
    </citation>
    <scope>NUCLEOTIDE SEQUENCE [LARGE SCALE GENOMIC DNA]</scope>
    <source>
        <strain>SCRI 1043 / ATCC BAA-672</strain>
    </source>
</reference>
<feature type="chain" id="PRO_1000044929" description="Pole-localizer protein TmaR">
    <location>
        <begin position="1"/>
        <end position="105"/>
    </location>
</feature>
<feature type="coiled-coil region" evidence="1">
    <location>
        <begin position="22"/>
        <end position="42"/>
    </location>
</feature>
<feature type="coiled-coil region" evidence="1">
    <location>
        <begin position="77"/>
        <end position="104"/>
    </location>
</feature>
<accession>Q6D434</accession>
<name>TMAR_PECAS</name>
<evidence type="ECO:0000255" key="1">
    <source>
        <dbReference type="HAMAP-Rule" id="MF_00683"/>
    </source>
</evidence>